<accession>P52537</accession>
<keyword id="KW-0167">Capsid protein</keyword>
<keyword id="KW-1048">Host nucleus</keyword>
<keyword id="KW-0945">Host-virus interaction</keyword>
<keyword id="KW-1185">Reference proteome</keyword>
<keyword id="KW-0231">Viral genome packaging</keyword>
<keyword id="KW-1163">Viral penetration into host nucleus</keyword>
<keyword id="KW-1188">Viral release from host cell</keyword>
<keyword id="KW-0946">Virion</keyword>
<keyword id="KW-1160">Virus entry into host cell</keyword>
<reference key="1">
    <citation type="journal article" date="1995" name="J. Virol.">
        <title>Intragenomic linear amplification of human herpesvirus 6B oriLyt suggests acquisition of oriLyt by transposition.</title>
        <authorList>
            <person name="Stamey F.R."/>
            <person name="Dominguez G."/>
            <person name="Black J.B."/>
            <person name="Dambaugh T.R."/>
            <person name="Pellett P.E."/>
        </authorList>
    </citation>
    <scope>NUCLEOTIDE SEQUENCE [GENOMIC DNA]</scope>
</reference>
<reference key="2">
    <citation type="journal article" date="1999" name="J. Virol.">
        <title>Human herpesvirus 6B genome sequence: coding content and comparison with human herpesvirus 6A.</title>
        <authorList>
            <person name="Dominguez G."/>
            <person name="Dambaugh T.R."/>
            <person name="Stamey F.R."/>
            <person name="Dewhurst S."/>
            <person name="Inoue N."/>
            <person name="Pellett P.E."/>
        </authorList>
    </citation>
    <scope>NUCLEOTIDE SEQUENCE [LARGE SCALE GENOMIC DNA]</scope>
</reference>
<organismHost>
    <name type="scientific">Homo sapiens</name>
    <name type="common">Human</name>
    <dbReference type="NCBI Taxonomy" id="9606"/>
</organismHost>
<feature type="chain" id="PRO_0000115999" description="Capsid vertex component 2">
    <location>
        <begin position="1"/>
        <end position="555"/>
    </location>
</feature>
<feature type="region of interest" description="Interaction with major capsid protein/MCP" evidence="1">
    <location>
        <begin position="1"/>
        <end position="47"/>
    </location>
</feature>
<gene>
    <name evidence="1" type="primary">CVC2</name>
    <name type="ordered locus">KA11R</name>
    <name type="ordered locus">U50</name>
</gene>
<dbReference type="EMBL" id="AF157706">
    <property type="protein sequence ID" value="AAB06348.1"/>
    <property type="molecule type" value="Genomic_DNA"/>
</dbReference>
<dbReference type="PIR" id="T44010">
    <property type="entry name" value="T44010"/>
</dbReference>
<dbReference type="RefSeq" id="NP_050231.1">
    <property type="nucleotide sequence ID" value="NC_000898.1"/>
</dbReference>
<dbReference type="SMR" id="P52537"/>
<dbReference type="DNASU" id="1497052"/>
<dbReference type="GeneID" id="1497052"/>
<dbReference type="KEGG" id="vg:1497052"/>
<dbReference type="Proteomes" id="UP000006930">
    <property type="component" value="Segment"/>
</dbReference>
<dbReference type="GO" id="GO:0043657">
    <property type="term" value="C:host cell"/>
    <property type="evidence" value="ECO:0007669"/>
    <property type="project" value="GOC"/>
</dbReference>
<dbReference type="GO" id="GO:0042025">
    <property type="term" value="C:host cell nucleus"/>
    <property type="evidence" value="ECO:0007669"/>
    <property type="project" value="UniProtKB-SubCell"/>
</dbReference>
<dbReference type="GO" id="GO:0019028">
    <property type="term" value="C:viral capsid"/>
    <property type="evidence" value="ECO:0007669"/>
    <property type="project" value="UniProtKB-KW"/>
</dbReference>
<dbReference type="GO" id="GO:0046718">
    <property type="term" value="P:symbiont entry into host cell"/>
    <property type="evidence" value="ECO:0007669"/>
    <property type="project" value="UniProtKB-KW"/>
</dbReference>
<dbReference type="GO" id="GO:0019072">
    <property type="term" value="P:viral genome packaging"/>
    <property type="evidence" value="ECO:0007669"/>
    <property type="project" value="InterPro"/>
</dbReference>
<dbReference type="GO" id="GO:0075732">
    <property type="term" value="P:viral penetration into host nucleus"/>
    <property type="evidence" value="ECO:0007669"/>
    <property type="project" value="UniProtKB-KW"/>
</dbReference>
<dbReference type="HAMAP" id="MF_04025">
    <property type="entry name" value="HSV_CVC2"/>
    <property type="match status" value="1"/>
</dbReference>
<dbReference type="InterPro" id="IPR002493">
    <property type="entry name" value="Herpes_UL25"/>
</dbReference>
<dbReference type="Pfam" id="PF01499">
    <property type="entry name" value="Herpes_UL25"/>
    <property type="match status" value="1"/>
</dbReference>
<protein>
    <recommendedName>
        <fullName evidence="1">Capsid vertex component 2</fullName>
    </recommendedName>
</protein>
<proteinExistence type="inferred from homology"/>
<name>CVC2_HHV6Z</name>
<organism>
    <name type="scientific">Human herpesvirus 6B (strain Z29)</name>
    <name type="common">HHV-6 variant B</name>
    <name type="synonym">Human B lymphotropic virus</name>
    <dbReference type="NCBI Taxonomy" id="36351"/>
    <lineage>
        <taxon>Viruses</taxon>
        <taxon>Duplodnaviria</taxon>
        <taxon>Heunggongvirae</taxon>
        <taxon>Peploviricota</taxon>
        <taxon>Herviviricetes</taxon>
        <taxon>Herpesvirales</taxon>
        <taxon>Orthoherpesviridae</taxon>
        <taxon>Betaherpesvirinae</taxon>
        <taxon>Roseolovirus</taxon>
        <taxon>Roseolovirus humanbeta6b</taxon>
        <taxon>Human herpesvirus 6B</taxon>
    </lineage>
</organism>
<comment type="function">
    <text evidence="1">Capsid vertex-specific component that plays a role during viral DNA encapsidation, assuring correct genome cleavage and presumably stabilizing capsids that contain full-length viral genomes. Participates in the interaction between the capsid and the tegument through interaction with the large tegument protein/LTP.</text>
</comment>
<comment type="subunit">
    <text evidence="1">Heterodimerizes with CVC1. Interacts with major capsid protein/MCP and triplex capsid protein 1/TRX1 at the pentamer vertices. Interacts with the large tegument protein/LTP.</text>
</comment>
<comment type="subcellular location">
    <subcellularLocation>
        <location evidence="1">Virion</location>
    </subcellularLocation>
    <subcellularLocation>
        <location evidence="1">Host nucleus</location>
    </subcellularLocation>
</comment>
<comment type="similarity">
    <text evidence="1">Belongs to the herpesviridae CVC2 protein family.</text>
</comment>
<sequence length="555" mass="63831">MAQCNLFYQYPITPILEGHVRNILICTEEDIRRLQSQSSLRLREKIDQGHRDKLLRMRLKTELDALQRKMQKDSDVLNSHLKAIEDALLFTNDGEVNVETKADTQLLPKSPERLEKFNQVAITPLDPFIRFTDDFRGEMINTFFNNAQMWNFTFGSWFYKLKRVFYNEPGLRRALKITNVDSLTISKELLTVTVNALEQATVYPIFGSEMSDLEAALCILAAFYSTYENSQIDERTTLVDIITLLPVIFRLLGSEITALKNVSPSGTYFGFNDPSCMKFFVPMRKGKHYAENTFGNHVLVKMLLGRGVMQKIPGEKDSQNFDVEARLHGAIKNDVLVYWTYQLMRPKLGNNVPIFIHDQHYLRSGLVAIESLFLLWRILNSESLFNKRVGKFLLTSIFPQLENVDFAENNFEAGNIQNFEYLMHHYVVPMYNLQNDISISTLFPGLVAVCVNESVRLGWEHKCAGAPSDAVQVQSKENPFVEYIRAQMEQQADVAILEKHDCILFHFENGLNITLSFTLPRQRLFAMASSLFNVNDTYDFIYFLVLGFLPIPAII</sequence>
<evidence type="ECO:0000255" key="1">
    <source>
        <dbReference type="HAMAP-Rule" id="MF_04025"/>
    </source>
</evidence>